<name>P2B10_ARATH</name>
<keyword id="KW-1185">Reference proteome</keyword>
<keyword id="KW-0833">Ubl conjugation pathway</keyword>
<organism>
    <name type="scientific">Arabidopsis thaliana</name>
    <name type="common">Mouse-ear cress</name>
    <dbReference type="NCBI Taxonomy" id="3702"/>
    <lineage>
        <taxon>Eukaryota</taxon>
        <taxon>Viridiplantae</taxon>
        <taxon>Streptophyta</taxon>
        <taxon>Embryophyta</taxon>
        <taxon>Tracheophyta</taxon>
        <taxon>Spermatophyta</taxon>
        <taxon>Magnoliopsida</taxon>
        <taxon>eudicotyledons</taxon>
        <taxon>Gunneridae</taxon>
        <taxon>Pentapetalae</taxon>
        <taxon>rosids</taxon>
        <taxon>malvids</taxon>
        <taxon>Brassicales</taxon>
        <taxon>Brassicaceae</taxon>
        <taxon>Camelineae</taxon>
        <taxon>Arabidopsis</taxon>
    </lineage>
</organism>
<gene>
    <name type="primary">PP2B10</name>
    <name type="ordered locus">At2g02360</name>
    <name type="ORF">T16F16.15</name>
</gene>
<sequence>MGRKRRVKSESSPFDSFPEDCISYIISFTNPRDACVAATVSKTFESTVKSDIIWEKFLPADYESLIPPSRVFSSKKELYFSLCNDPVLFDDDKKSVWLEKASGKRCLMLSAMNLSIIWGDNPQYWQWIPIPESRFEKVAKLRDVCWFEIRGRTNTRVLSPRTRYSAYIVFKGVDKCYGFQNVAIEAAVGVVGQEPSRRLICFSEAIRRGRRNVVKPKQREDGWMEIELGEFFNDGGIMDNDEIEMSALETKQLNRKCGLIIQGIEIRPAKIL</sequence>
<dbReference type="EMBL" id="AC005312">
    <property type="protein sequence ID" value="AAC78518.1"/>
    <property type="molecule type" value="Genomic_DNA"/>
</dbReference>
<dbReference type="EMBL" id="CP002685">
    <property type="protein sequence ID" value="AEC05569.1"/>
    <property type="molecule type" value="Genomic_DNA"/>
</dbReference>
<dbReference type="EMBL" id="BT025799">
    <property type="protein sequence ID" value="ABF83689.1"/>
    <property type="molecule type" value="mRNA"/>
</dbReference>
<dbReference type="EMBL" id="AK227207">
    <property type="protein sequence ID" value="BAE99245.1"/>
    <property type="molecule type" value="mRNA"/>
</dbReference>
<dbReference type="PIR" id="G84435">
    <property type="entry name" value="G84435"/>
</dbReference>
<dbReference type="SMR" id="Q9ZVQ6"/>
<dbReference type="BioGRID" id="170">
    <property type="interactions" value="4"/>
</dbReference>
<dbReference type="FunCoup" id="Q9ZVQ6">
    <property type="interactions" value="235"/>
</dbReference>
<dbReference type="IntAct" id="Q9ZVQ6">
    <property type="interactions" value="4"/>
</dbReference>
<dbReference type="STRING" id="3702.Q9ZVQ6"/>
<dbReference type="PaxDb" id="3702-AT2G02360.1"/>
<dbReference type="ProteomicsDB" id="248695"/>
<dbReference type="DNASU" id="814767"/>
<dbReference type="EnsemblPlants" id="AT2G02360.1">
    <property type="protein sequence ID" value="AT2G02360.1"/>
    <property type="gene ID" value="AT2G02360"/>
</dbReference>
<dbReference type="GeneID" id="814767"/>
<dbReference type="Gramene" id="AT2G02360.1">
    <property type="protein sequence ID" value="AT2G02360.1"/>
    <property type="gene ID" value="AT2G02360"/>
</dbReference>
<dbReference type="KEGG" id="ath:AT2G02360"/>
<dbReference type="Araport" id="AT2G02360"/>
<dbReference type="TAIR" id="AT2G02360">
    <property type="gene designation" value="PP2-B10"/>
</dbReference>
<dbReference type="eggNOG" id="ENOG502QRA4">
    <property type="taxonomic scope" value="Eukaryota"/>
</dbReference>
<dbReference type="HOGENOM" id="CLU_050973_0_0_1"/>
<dbReference type="InParanoid" id="Q9ZVQ6"/>
<dbReference type="OMA" id="TLFIVWG"/>
<dbReference type="PhylomeDB" id="Q9ZVQ6"/>
<dbReference type="UniPathway" id="UPA00143"/>
<dbReference type="PRO" id="PR:Q9ZVQ6"/>
<dbReference type="Proteomes" id="UP000006548">
    <property type="component" value="Chromosome 2"/>
</dbReference>
<dbReference type="ExpressionAtlas" id="Q9ZVQ6">
    <property type="expression patterns" value="baseline and differential"/>
</dbReference>
<dbReference type="GO" id="GO:0030246">
    <property type="term" value="F:carbohydrate binding"/>
    <property type="evidence" value="ECO:0000314"/>
    <property type="project" value="TAIR"/>
</dbReference>
<dbReference type="GO" id="GO:0016567">
    <property type="term" value="P:protein ubiquitination"/>
    <property type="evidence" value="ECO:0007669"/>
    <property type="project" value="UniProtKB-UniPathway"/>
</dbReference>
<dbReference type="CDD" id="cd22162">
    <property type="entry name" value="F-box_AtSKIP3-like"/>
    <property type="match status" value="1"/>
</dbReference>
<dbReference type="FunFam" id="1.20.1280.50:FF:000112">
    <property type="entry name" value="F-box protein PP2-B1"/>
    <property type="match status" value="1"/>
</dbReference>
<dbReference type="Gene3D" id="1.20.1280.50">
    <property type="match status" value="1"/>
</dbReference>
<dbReference type="InterPro" id="IPR036047">
    <property type="entry name" value="F-box-like_dom_sf"/>
</dbReference>
<dbReference type="InterPro" id="IPR001810">
    <property type="entry name" value="F-box_dom"/>
</dbReference>
<dbReference type="InterPro" id="IPR025886">
    <property type="entry name" value="PP2-like"/>
</dbReference>
<dbReference type="PANTHER" id="PTHR32278">
    <property type="entry name" value="F-BOX DOMAIN-CONTAINING PROTEIN"/>
    <property type="match status" value="1"/>
</dbReference>
<dbReference type="PANTHER" id="PTHR32278:SF119">
    <property type="entry name" value="F-BOX PROTEIN PP2-B10-RELATED"/>
    <property type="match status" value="1"/>
</dbReference>
<dbReference type="Pfam" id="PF00646">
    <property type="entry name" value="F-box"/>
    <property type="match status" value="1"/>
</dbReference>
<dbReference type="Pfam" id="PF14299">
    <property type="entry name" value="PP2"/>
    <property type="match status" value="1"/>
</dbReference>
<dbReference type="SMART" id="SM00256">
    <property type="entry name" value="FBOX"/>
    <property type="match status" value="1"/>
</dbReference>
<dbReference type="SUPFAM" id="SSF81383">
    <property type="entry name" value="F-box domain"/>
    <property type="match status" value="1"/>
</dbReference>
<dbReference type="PROSITE" id="PS50181">
    <property type="entry name" value="FBOX"/>
    <property type="match status" value="1"/>
</dbReference>
<evidence type="ECO:0000250" key="1"/>
<evidence type="ECO:0000255" key="2">
    <source>
        <dbReference type="PROSITE-ProRule" id="PRU00080"/>
    </source>
</evidence>
<evidence type="ECO:0000269" key="3">
    <source>
    </source>
</evidence>
<protein>
    <recommendedName>
        <fullName>F-box protein PP2-B10</fullName>
    </recommendedName>
    <alternativeName>
        <fullName>Protein PHLOEM PROTEIN 2-LIKE B10</fullName>
        <shortName>AtPP2-B10</shortName>
    </alternativeName>
</protein>
<comment type="function">
    <text evidence="1">Component of SCF(ASK-cullin-F-box) E3 ubiquitin ligase complexes, which may mediate the ubiquitination and subsequent proteasomal degradation of target proteins.</text>
</comment>
<comment type="pathway">
    <text>Protein modification; protein ubiquitination.</text>
</comment>
<comment type="subunit">
    <text evidence="1 3">Part of a SCF (ASK-cullin-F-box) protein ligase complex (By similarity). Interacts with SKP1B/ASK2, ASK11 and ASK12.</text>
</comment>
<comment type="domain">
    <text evidence="1">The F-box is necessary for the interaction with ASK proteins.</text>
</comment>
<proteinExistence type="evidence at protein level"/>
<feature type="chain" id="PRO_0000272218" description="F-box protein PP2-B10">
    <location>
        <begin position="1"/>
        <end position="272"/>
    </location>
</feature>
<feature type="domain" description="F-box" evidence="2">
    <location>
        <begin position="11"/>
        <end position="57"/>
    </location>
</feature>
<reference key="1">
    <citation type="journal article" date="1999" name="Nature">
        <title>Sequence and analysis of chromosome 2 of the plant Arabidopsis thaliana.</title>
        <authorList>
            <person name="Lin X."/>
            <person name="Kaul S."/>
            <person name="Rounsley S.D."/>
            <person name="Shea T.P."/>
            <person name="Benito M.-I."/>
            <person name="Town C.D."/>
            <person name="Fujii C.Y."/>
            <person name="Mason T.M."/>
            <person name="Bowman C.L."/>
            <person name="Barnstead M.E."/>
            <person name="Feldblyum T.V."/>
            <person name="Buell C.R."/>
            <person name="Ketchum K.A."/>
            <person name="Lee J.J."/>
            <person name="Ronning C.M."/>
            <person name="Koo H.L."/>
            <person name="Moffat K.S."/>
            <person name="Cronin L.A."/>
            <person name="Shen M."/>
            <person name="Pai G."/>
            <person name="Van Aken S."/>
            <person name="Umayam L."/>
            <person name="Tallon L.J."/>
            <person name="Gill J.E."/>
            <person name="Adams M.D."/>
            <person name="Carrera A.J."/>
            <person name="Creasy T.H."/>
            <person name="Goodman H.M."/>
            <person name="Somerville C.R."/>
            <person name="Copenhaver G.P."/>
            <person name="Preuss D."/>
            <person name="Nierman W.C."/>
            <person name="White O."/>
            <person name="Eisen J.A."/>
            <person name="Salzberg S.L."/>
            <person name="Fraser C.M."/>
            <person name="Venter J.C."/>
        </authorList>
    </citation>
    <scope>NUCLEOTIDE SEQUENCE [LARGE SCALE GENOMIC DNA]</scope>
    <source>
        <strain>cv. Columbia</strain>
    </source>
</reference>
<reference key="2">
    <citation type="journal article" date="2017" name="Plant J.">
        <title>Araport11: a complete reannotation of the Arabidopsis thaliana reference genome.</title>
        <authorList>
            <person name="Cheng C.Y."/>
            <person name="Krishnakumar V."/>
            <person name="Chan A.P."/>
            <person name="Thibaud-Nissen F."/>
            <person name="Schobel S."/>
            <person name="Town C.D."/>
        </authorList>
    </citation>
    <scope>GENOME REANNOTATION</scope>
    <source>
        <strain>cv. Columbia</strain>
    </source>
</reference>
<reference key="3">
    <citation type="submission" date="2006-06" db="EMBL/GenBank/DDBJ databases">
        <title>Arabidopsis ORF clones.</title>
        <authorList>
            <person name="Kim C.J."/>
            <person name="Chen H."/>
            <person name="Quinitio C."/>
            <person name="Shinn P."/>
            <person name="Ecker J.R."/>
        </authorList>
    </citation>
    <scope>NUCLEOTIDE SEQUENCE [LARGE SCALE MRNA]</scope>
    <source>
        <strain>cv. Columbia</strain>
    </source>
</reference>
<reference key="4">
    <citation type="submission" date="2006-07" db="EMBL/GenBank/DDBJ databases">
        <title>Large-scale analysis of RIKEN Arabidopsis full-length (RAFL) cDNAs.</title>
        <authorList>
            <person name="Totoki Y."/>
            <person name="Seki M."/>
            <person name="Ishida J."/>
            <person name="Nakajima M."/>
            <person name="Enju A."/>
            <person name="Kamiya A."/>
            <person name="Narusaka M."/>
            <person name="Shin-i T."/>
            <person name="Nakagawa M."/>
            <person name="Sakamoto N."/>
            <person name="Oishi K."/>
            <person name="Kohara Y."/>
            <person name="Kobayashi M."/>
            <person name="Toyoda A."/>
            <person name="Sakaki Y."/>
            <person name="Sakurai T."/>
            <person name="Iida K."/>
            <person name="Akiyama K."/>
            <person name="Satou M."/>
            <person name="Toyoda T."/>
            <person name="Konagaya A."/>
            <person name="Carninci P."/>
            <person name="Kawai J."/>
            <person name="Hayashizaki Y."/>
            <person name="Shinozaki K."/>
        </authorList>
    </citation>
    <scope>NUCLEOTIDE SEQUENCE [LARGE SCALE MRNA]</scope>
    <source>
        <strain>cv. Columbia</strain>
    </source>
</reference>
<reference key="5">
    <citation type="journal article" date="2003" name="Plant Physiol.">
        <title>Diversity of the superfamily of phloem lectins (phloem protein 2) in angiosperms.</title>
        <authorList>
            <person name="Dinant S."/>
            <person name="Clark A.M."/>
            <person name="Zhu Y."/>
            <person name="Vilaine F."/>
            <person name="Palauqui J.-C."/>
            <person name="Kusiak C."/>
            <person name="Thompson G.A."/>
        </authorList>
    </citation>
    <scope>GENE FAMILY</scope>
    <scope>NOMENCLATURE</scope>
</reference>
<reference key="6">
    <citation type="journal article" date="2004" name="Plant Cell Physiol.">
        <title>Expression and interaction analysis of Arabidopsis Skp1-related genes.</title>
        <authorList>
            <person name="Takahashi N."/>
            <person name="Kuroda H."/>
            <person name="Kuromori T."/>
            <person name="Hirayama T."/>
            <person name="Seki M."/>
            <person name="Shinozaki K."/>
            <person name="Shimada H."/>
            <person name="Matsui M."/>
        </authorList>
    </citation>
    <scope>INTERACTION WITH SKP1B/ASK2; ASK11 AND ASK12</scope>
</reference>
<accession>Q9ZVQ6</accession>